<sequence>MRVKGGTVTRARRKKWLKLAKGYWGHKSIGYKVAKQAVVKSWTYAFRDRKQVKRNFRKLWISRINAAVRPLGMSYSQFINGLKKANVKINRKMLSELAIREMKTFEMLVSISKSSK</sequence>
<name>RL20_MYCPU</name>
<accession>Q98QV0</accession>
<evidence type="ECO:0000255" key="1">
    <source>
        <dbReference type="HAMAP-Rule" id="MF_00382"/>
    </source>
</evidence>
<evidence type="ECO:0000305" key="2"/>
<dbReference type="EMBL" id="AL445563">
    <property type="protein sequence ID" value="CAC13434.1"/>
    <property type="molecule type" value="Genomic_DNA"/>
</dbReference>
<dbReference type="PIR" id="E90544">
    <property type="entry name" value="E90544"/>
</dbReference>
<dbReference type="RefSeq" id="WP_010925065.1">
    <property type="nucleotide sequence ID" value="NC_002771.1"/>
</dbReference>
<dbReference type="SMR" id="Q98QV0"/>
<dbReference type="STRING" id="272635.gene:17576851"/>
<dbReference type="KEGG" id="mpu:MYPU_2610"/>
<dbReference type="eggNOG" id="COG0292">
    <property type="taxonomic scope" value="Bacteria"/>
</dbReference>
<dbReference type="HOGENOM" id="CLU_123265_0_1_14"/>
<dbReference type="BioCyc" id="MPUL272635:G1GT6-262-MONOMER"/>
<dbReference type="Proteomes" id="UP000000528">
    <property type="component" value="Chromosome"/>
</dbReference>
<dbReference type="GO" id="GO:1990904">
    <property type="term" value="C:ribonucleoprotein complex"/>
    <property type="evidence" value="ECO:0007669"/>
    <property type="project" value="UniProtKB-KW"/>
</dbReference>
<dbReference type="GO" id="GO:0005840">
    <property type="term" value="C:ribosome"/>
    <property type="evidence" value="ECO:0007669"/>
    <property type="project" value="UniProtKB-KW"/>
</dbReference>
<dbReference type="GO" id="GO:0019843">
    <property type="term" value="F:rRNA binding"/>
    <property type="evidence" value="ECO:0007669"/>
    <property type="project" value="UniProtKB-UniRule"/>
</dbReference>
<dbReference type="GO" id="GO:0003735">
    <property type="term" value="F:structural constituent of ribosome"/>
    <property type="evidence" value="ECO:0007669"/>
    <property type="project" value="InterPro"/>
</dbReference>
<dbReference type="GO" id="GO:0000027">
    <property type="term" value="P:ribosomal large subunit assembly"/>
    <property type="evidence" value="ECO:0007669"/>
    <property type="project" value="UniProtKB-UniRule"/>
</dbReference>
<dbReference type="GO" id="GO:0006412">
    <property type="term" value="P:translation"/>
    <property type="evidence" value="ECO:0007669"/>
    <property type="project" value="InterPro"/>
</dbReference>
<dbReference type="CDD" id="cd07026">
    <property type="entry name" value="Ribosomal_L20"/>
    <property type="match status" value="1"/>
</dbReference>
<dbReference type="FunFam" id="1.10.1900.20:FF:000001">
    <property type="entry name" value="50S ribosomal protein L20"/>
    <property type="match status" value="1"/>
</dbReference>
<dbReference type="Gene3D" id="6.10.160.10">
    <property type="match status" value="1"/>
</dbReference>
<dbReference type="Gene3D" id="1.10.1900.20">
    <property type="entry name" value="Ribosomal protein L20"/>
    <property type="match status" value="1"/>
</dbReference>
<dbReference type="HAMAP" id="MF_00382">
    <property type="entry name" value="Ribosomal_bL20"/>
    <property type="match status" value="1"/>
</dbReference>
<dbReference type="InterPro" id="IPR005813">
    <property type="entry name" value="Ribosomal_bL20"/>
</dbReference>
<dbReference type="InterPro" id="IPR049946">
    <property type="entry name" value="RIBOSOMAL_L20_CS"/>
</dbReference>
<dbReference type="InterPro" id="IPR035566">
    <property type="entry name" value="Ribosomal_protein_bL20_C"/>
</dbReference>
<dbReference type="NCBIfam" id="TIGR01032">
    <property type="entry name" value="rplT_bact"/>
    <property type="match status" value="1"/>
</dbReference>
<dbReference type="PANTHER" id="PTHR10986">
    <property type="entry name" value="39S RIBOSOMAL PROTEIN L20"/>
    <property type="match status" value="1"/>
</dbReference>
<dbReference type="Pfam" id="PF00453">
    <property type="entry name" value="Ribosomal_L20"/>
    <property type="match status" value="1"/>
</dbReference>
<dbReference type="PRINTS" id="PR00062">
    <property type="entry name" value="RIBOSOMALL20"/>
</dbReference>
<dbReference type="SUPFAM" id="SSF74731">
    <property type="entry name" value="Ribosomal protein L20"/>
    <property type="match status" value="1"/>
</dbReference>
<dbReference type="PROSITE" id="PS00937">
    <property type="entry name" value="RIBOSOMAL_L20"/>
    <property type="match status" value="1"/>
</dbReference>
<reference key="1">
    <citation type="journal article" date="2001" name="Nucleic Acids Res.">
        <title>The complete genome sequence of the murine respiratory pathogen Mycoplasma pulmonis.</title>
        <authorList>
            <person name="Chambaud I."/>
            <person name="Heilig R."/>
            <person name="Ferris S."/>
            <person name="Barbe V."/>
            <person name="Samson D."/>
            <person name="Galisson F."/>
            <person name="Moszer I."/>
            <person name="Dybvig K."/>
            <person name="Wroblewski H."/>
            <person name="Viari A."/>
            <person name="Rocha E.P.C."/>
            <person name="Blanchard A."/>
        </authorList>
    </citation>
    <scope>NUCLEOTIDE SEQUENCE [LARGE SCALE GENOMIC DNA]</scope>
    <source>
        <strain>UAB CTIP</strain>
    </source>
</reference>
<protein>
    <recommendedName>
        <fullName evidence="1">Large ribosomal subunit protein bL20</fullName>
    </recommendedName>
    <alternativeName>
        <fullName evidence="2">50S ribosomal protein L20</fullName>
    </alternativeName>
</protein>
<feature type="chain" id="PRO_0000177188" description="Large ribosomal subunit protein bL20">
    <location>
        <begin position="1"/>
        <end position="116"/>
    </location>
</feature>
<gene>
    <name evidence="1" type="primary">rplT</name>
    <name type="ordered locus">MYPU_2610</name>
</gene>
<comment type="function">
    <text evidence="1">Binds directly to 23S ribosomal RNA and is necessary for the in vitro assembly process of the 50S ribosomal subunit. It is not involved in the protein synthesizing functions of that subunit.</text>
</comment>
<comment type="similarity">
    <text evidence="1">Belongs to the bacterial ribosomal protein bL20 family.</text>
</comment>
<keyword id="KW-1185">Reference proteome</keyword>
<keyword id="KW-0687">Ribonucleoprotein</keyword>
<keyword id="KW-0689">Ribosomal protein</keyword>
<keyword id="KW-0694">RNA-binding</keyword>
<keyword id="KW-0699">rRNA-binding</keyword>
<organism>
    <name type="scientific">Mycoplasmopsis pulmonis (strain UAB CTIP)</name>
    <name type="common">Mycoplasma pulmonis</name>
    <dbReference type="NCBI Taxonomy" id="272635"/>
    <lineage>
        <taxon>Bacteria</taxon>
        <taxon>Bacillati</taxon>
        <taxon>Mycoplasmatota</taxon>
        <taxon>Mycoplasmoidales</taxon>
        <taxon>Metamycoplasmataceae</taxon>
        <taxon>Mycoplasmopsis</taxon>
    </lineage>
</organism>
<proteinExistence type="inferred from homology"/>